<evidence type="ECO:0000255" key="1">
    <source>
        <dbReference type="HAMAP-Rule" id="MF_01331"/>
    </source>
</evidence>
<evidence type="ECO:0000305" key="2"/>
<accession>Q73F91</accession>
<dbReference type="EMBL" id="AE017194">
    <property type="protein sequence ID" value="AAS39051.1"/>
    <property type="molecule type" value="Genomic_DNA"/>
</dbReference>
<dbReference type="SMR" id="Q73F91"/>
<dbReference type="KEGG" id="bca:BCE_0115"/>
<dbReference type="HOGENOM" id="CLU_083987_3_3_9"/>
<dbReference type="Proteomes" id="UP000002527">
    <property type="component" value="Chromosome"/>
</dbReference>
<dbReference type="GO" id="GO:0022625">
    <property type="term" value="C:cytosolic large ribosomal subunit"/>
    <property type="evidence" value="ECO:0007669"/>
    <property type="project" value="TreeGrafter"/>
</dbReference>
<dbReference type="GO" id="GO:0019843">
    <property type="term" value="F:rRNA binding"/>
    <property type="evidence" value="ECO:0007669"/>
    <property type="project" value="UniProtKB-UniRule"/>
</dbReference>
<dbReference type="GO" id="GO:0003735">
    <property type="term" value="F:structural constituent of ribosome"/>
    <property type="evidence" value="ECO:0007669"/>
    <property type="project" value="InterPro"/>
</dbReference>
<dbReference type="GO" id="GO:0006412">
    <property type="term" value="P:translation"/>
    <property type="evidence" value="ECO:0007669"/>
    <property type="project" value="UniProtKB-UniRule"/>
</dbReference>
<dbReference type="CDD" id="cd00336">
    <property type="entry name" value="Ribosomal_L22"/>
    <property type="match status" value="1"/>
</dbReference>
<dbReference type="FunFam" id="3.90.470.10:FF:000001">
    <property type="entry name" value="50S ribosomal protein L22"/>
    <property type="match status" value="1"/>
</dbReference>
<dbReference type="Gene3D" id="3.90.470.10">
    <property type="entry name" value="Ribosomal protein L22/L17"/>
    <property type="match status" value="1"/>
</dbReference>
<dbReference type="HAMAP" id="MF_01331_B">
    <property type="entry name" value="Ribosomal_uL22_B"/>
    <property type="match status" value="1"/>
</dbReference>
<dbReference type="InterPro" id="IPR001063">
    <property type="entry name" value="Ribosomal_uL22"/>
</dbReference>
<dbReference type="InterPro" id="IPR005727">
    <property type="entry name" value="Ribosomal_uL22_bac/chlpt-type"/>
</dbReference>
<dbReference type="InterPro" id="IPR047867">
    <property type="entry name" value="Ribosomal_uL22_bac/org-type"/>
</dbReference>
<dbReference type="InterPro" id="IPR018260">
    <property type="entry name" value="Ribosomal_uL22_CS"/>
</dbReference>
<dbReference type="InterPro" id="IPR036394">
    <property type="entry name" value="Ribosomal_uL22_sf"/>
</dbReference>
<dbReference type="NCBIfam" id="TIGR01044">
    <property type="entry name" value="rplV_bact"/>
    <property type="match status" value="1"/>
</dbReference>
<dbReference type="PANTHER" id="PTHR13501">
    <property type="entry name" value="CHLOROPLAST 50S RIBOSOMAL PROTEIN L22-RELATED"/>
    <property type="match status" value="1"/>
</dbReference>
<dbReference type="PANTHER" id="PTHR13501:SF8">
    <property type="entry name" value="LARGE RIBOSOMAL SUBUNIT PROTEIN UL22M"/>
    <property type="match status" value="1"/>
</dbReference>
<dbReference type="Pfam" id="PF00237">
    <property type="entry name" value="Ribosomal_L22"/>
    <property type="match status" value="1"/>
</dbReference>
<dbReference type="SUPFAM" id="SSF54843">
    <property type="entry name" value="Ribosomal protein L22"/>
    <property type="match status" value="1"/>
</dbReference>
<dbReference type="PROSITE" id="PS00464">
    <property type="entry name" value="RIBOSOMAL_L22"/>
    <property type="match status" value="1"/>
</dbReference>
<protein>
    <recommendedName>
        <fullName evidence="1">Large ribosomal subunit protein uL22</fullName>
    </recommendedName>
    <alternativeName>
        <fullName evidence="2">50S ribosomal protein L22</fullName>
    </alternativeName>
</protein>
<proteinExistence type="inferred from homology"/>
<sequence length="113" mass="12536">MQAKAVARTVRIAPRKVRLVVDLIRGKQVGEAIAILNHTPKTASPVVEKVLKSAIANAEHNYEMDINNLVVEKVFVDEGPTLKRFRPRAMGRASQINKRTSHITVVVSEKKEG</sequence>
<reference key="1">
    <citation type="journal article" date="2004" name="Nucleic Acids Res.">
        <title>The genome sequence of Bacillus cereus ATCC 10987 reveals metabolic adaptations and a large plasmid related to Bacillus anthracis pXO1.</title>
        <authorList>
            <person name="Rasko D.A."/>
            <person name="Ravel J."/>
            <person name="Oekstad O.A."/>
            <person name="Helgason E."/>
            <person name="Cer R.Z."/>
            <person name="Jiang L."/>
            <person name="Shores K.A."/>
            <person name="Fouts D.E."/>
            <person name="Tourasse N.J."/>
            <person name="Angiuoli S.V."/>
            <person name="Kolonay J.F."/>
            <person name="Nelson W.C."/>
            <person name="Kolstoe A.-B."/>
            <person name="Fraser C.M."/>
            <person name="Read T.D."/>
        </authorList>
    </citation>
    <scope>NUCLEOTIDE SEQUENCE [LARGE SCALE GENOMIC DNA]</scope>
    <source>
        <strain>ATCC 10987 / NRS 248</strain>
    </source>
</reference>
<keyword id="KW-0687">Ribonucleoprotein</keyword>
<keyword id="KW-0689">Ribosomal protein</keyword>
<keyword id="KW-0694">RNA-binding</keyword>
<keyword id="KW-0699">rRNA-binding</keyword>
<name>RL22_BACC1</name>
<comment type="function">
    <text evidence="1">This protein binds specifically to 23S rRNA; its binding is stimulated by other ribosomal proteins, e.g. L4, L17, and L20. It is important during the early stages of 50S assembly. It makes multiple contacts with different domains of the 23S rRNA in the assembled 50S subunit and ribosome (By similarity).</text>
</comment>
<comment type="function">
    <text evidence="1">The globular domain of the protein is located near the polypeptide exit tunnel on the outside of the subunit, while an extended beta-hairpin is found that lines the wall of the exit tunnel in the center of the 70S ribosome.</text>
</comment>
<comment type="subunit">
    <text evidence="1">Part of the 50S ribosomal subunit.</text>
</comment>
<comment type="similarity">
    <text evidence="1">Belongs to the universal ribosomal protein uL22 family.</text>
</comment>
<gene>
    <name evidence="1" type="primary">rplV</name>
    <name type="ordered locus">BCE_0115</name>
</gene>
<organism>
    <name type="scientific">Bacillus cereus (strain ATCC 10987 / NRS 248)</name>
    <dbReference type="NCBI Taxonomy" id="222523"/>
    <lineage>
        <taxon>Bacteria</taxon>
        <taxon>Bacillati</taxon>
        <taxon>Bacillota</taxon>
        <taxon>Bacilli</taxon>
        <taxon>Bacillales</taxon>
        <taxon>Bacillaceae</taxon>
        <taxon>Bacillus</taxon>
        <taxon>Bacillus cereus group</taxon>
    </lineage>
</organism>
<feature type="chain" id="PRO_0000125115" description="Large ribosomal subunit protein uL22">
    <location>
        <begin position="1"/>
        <end position="113"/>
    </location>
</feature>